<comment type="function">
    <text evidence="2">Promotes EGF-induced cell migration by displacing tensin TNS3 from the cytoplasmic tail of integrin ITGB1 which results in dissociation of TNS3 from focal adhesions, disassembly of actin stress fibers and initiation of cell migration. Suppresses ligand-induced degradation of EGFR by reducing EGFR ubiquitination in the presence of EGF. Increases MET protein stability by inhibiting MET endocytosis and subsequent lysosomal degradation which leads to increased cell survival, proliferation and migration.</text>
</comment>
<comment type="subunit">
    <text evidence="2">Interacts (via SH2 domain) with Rho GTPase-activating protein DLC1 (via C-terminus); the interaction is independent of DLC1 tyrosine phosphorylation. Interacts with integrin ITGB1; the interaction displaces tensin TNS3 from the ITGB1 cytoplasmic tail and promotes ITGB1 stability. Interacts (via SH2 domain) with E3 ubiquitin-protein ligase CBL (phosphorylated on 'Tyr-780'); the interaction is enhanced in the presence of EGF and reduces interaction of CBL with EGFR. Interacts (via SH2 domain) with receptor tyrosine kinase MET (when phosphorylated); the interaction increases MET protein stability.</text>
</comment>
<comment type="subcellular location">
    <subcellularLocation>
        <location evidence="2">Cell junction</location>
        <location evidence="2">Focal adhesion</location>
    </subcellularLocation>
    <subcellularLocation>
        <location evidence="2">Cytoplasm</location>
        <location evidence="2">Cytoskeleton</location>
    </subcellularLocation>
</comment>
<comment type="similarity">
    <text evidence="6">Belongs to the PTEN phosphatase protein family.</text>
</comment>
<reference key="1">
    <citation type="journal article" date="2009" name="PLoS Biol.">
        <title>Lineage-specific biology revealed by a finished genome assembly of the mouse.</title>
        <authorList>
            <person name="Church D.M."/>
            <person name="Goodstadt L."/>
            <person name="Hillier L.W."/>
            <person name="Zody M.C."/>
            <person name="Goldstein S."/>
            <person name="She X."/>
            <person name="Bult C.J."/>
            <person name="Agarwala R."/>
            <person name="Cherry J.L."/>
            <person name="DiCuccio M."/>
            <person name="Hlavina W."/>
            <person name="Kapustin Y."/>
            <person name="Meric P."/>
            <person name="Maglott D."/>
            <person name="Birtle Z."/>
            <person name="Marques A.C."/>
            <person name="Graves T."/>
            <person name="Zhou S."/>
            <person name="Teague B."/>
            <person name="Potamousis K."/>
            <person name="Churas C."/>
            <person name="Place M."/>
            <person name="Herschleb J."/>
            <person name="Runnheim R."/>
            <person name="Forrest D."/>
            <person name="Amos-Landgraf J."/>
            <person name="Schwartz D.C."/>
            <person name="Cheng Z."/>
            <person name="Lindblad-Toh K."/>
            <person name="Eichler E.E."/>
            <person name="Ponting C.P."/>
        </authorList>
    </citation>
    <scope>NUCLEOTIDE SEQUENCE [LARGE SCALE GENOMIC DNA]</scope>
    <source>
        <strain>C57BL/6J</strain>
    </source>
</reference>
<reference key="2">
    <citation type="submission" date="2005-07" db="EMBL/GenBank/DDBJ databases">
        <authorList>
            <person name="Mural R.J."/>
            <person name="Adams M.D."/>
            <person name="Myers E.W."/>
            <person name="Smith H.O."/>
            <person name="Venter J.C."/>
        </authorList>
    </citation>
    <scope>NUCLEOTIDE SEQUENCE [LARGE SCALE GENOMIC DNA]</scope>
</reference>
<reference key="3">
    <citation type="journal article" date="2005" name="Science">
        <title>The transcriptional landscape of the mammalian genome.</title>
        <authorList>
            <person name="Carninci P."/>
            <person name="Kasukawa T."/>
            <person name="Katayama S."/>
            <person name="Gough J."/>
            <person name="Frith M.C."/>
            <person name="Maeda N."/>
            <person name="Oyama R."/>
            <person name="Ravasi T."/>
            <person name="Lenhard B."/>
            <person name="Wells C."/>
            <person name="Kodzius R."/>
            <person name="Shimokawa K."/>
            <person name="Bajic V.B."/>
            <person name="Brenner S.E."/>
            <person name="Batalov S."/>
            <person name="Forrest A.R."/>
            <person name="Zavolan M."/>
            <person name="Davis M.J."/>
            <person name="Wilming L.G."/>
            <person name="Aidinis V."/>
            <person name="Allen J.E."/>
            <person name="Ambesi-Impiombato A."/>
            <person name="Apweiler R."/>
            <person name="Aturaliya R.N."/>
            <person name="Bailey T.L."/>
            <person name="Bansal M."/>
            <person name="Baxter L."/>
            <person name="Beisel K.W."/>
            <person name="Bersano T."/>
            <person name="Bono H."/>
            <person name="Chalk A.M."/>
            <person name="Chiu K.P."/>
            <person name="Choudhary V."/>
            <person name="Christoffels A."/>
            <person name="Clutterbuck D.R."/>
            <person name="Crowe M.L."/>
            <person name="Dalla E."/>
            <person name="Dalrymple B.P."/>
            <person name="de Bono B."/>
            <person name="Della Gatta G."/>
            <person name="di Bernardo D."/>
            <person name="Down T."/>
            <person name="Engstrom P."/>
            <person name="Fagiolini M."/>
            <person name="Faulkner G."/>
            <person name="Fletcher C.F."/>
            <person name="Fukushima T."/>
            <person name="Furuno M."/>
            <person name="Futaki S."/>
            <person name="Gariboldi M."/>
            <person name="Georgii-Hemming P."/>
            <person name="Gingeras T.R."/>
            <person name="Gojobori T."/>
            <person name="Green R.E."/>
            <person name="Gustincich S."/>
            <person name="Harbers M."/>
            <person name="Hayashi Y."/>
            <person name="Hensch T.K."/>
            <person name="Hirokawa N."/>
            <person name="Hill D."/>
            <person name="Huminiecki L."/>
            <person name="Iacono M."/>
            <person name="Ikeo K."/>
            <person name="Iwama A."/>
            <person name="Ishikawa T."/>
            <person name="Jakt M."/>
            <person name="Kanapin A."/>
            <person name="Katoh M."/>
            <person name="Kawasawa Y."/>
            <person name="Kelso J."/>
            <person name="Kitamura H."/>
            <person name="Kitano H."/>
            <person name="Kollias G."/>
            <person name="Krishnan S.P."/>
            <person name="Kruger A."/>
            <person name="Kummerfeld S.K."/>
            <person name="Kurochkin I.V."/>
            <person name="Lareau L.F."/>
            <person name="Lazarevic D."/>
            <person name="Lipovich L."/>
            <person name="Liu J."/>
            <person name="Liuni S."/>
            <person name="McWilliam S."/>
            <person name="Madan Babu M."/>
            <person name="Madera M."/>
            <person name="Marchionni L."/>
            <person name="Matsuda H."/>
            <person name="Matsuzawa S."/>
            <person name="Miki H."/>
            <person name="Mignone F."/>
            <person name="Miyake S."/>
            <person name="Morris K."/>
            <person name="Mottagui-Tabar S."/>
            <person name="Mulder N."/>
            <person name="Nakano N."/>
            <person name="Nakauchi H."/>
            <person name="Ng P."/>
            <person name="Nilsson R."/>
            <person name="Nishiguchi S."/>
            <person name="Nishikawa S."/>
            <person name="Nori F."/>
            <person name="Ohara O."/>
            <person name="Okazaki Y."/>
            <person name="Orlando V."/>
            <person name="Pang K.C."/>
            <person name="Pavan W.J."/>
            <person name="Pavesi G."/>
            <person name="Pesole G."/>
            <person name="Petrovsky N."/>
            <person name="Piazza S."/>
            <person name="Reed J."/>
            <person name="Reid J.F."/>
            <person name="Ring B.Z."/>
            <person name="Ringwald M."/>
            <person name="Rost B."/>
            <person name="Ruan Y."/>
            <person name="Salzberg S.L."/>
            <person name="Sandelin A."/>
            <person name="Schneider C."/>
            <person name="Schoenbach C."/>
            <person name="Sekiguchi K."/>
            <person name="Semple C.A."/>
            <person name="Seno S."/>
            <person name="Sessa L."/>
            <person name="Sheng Y."/>
            <person name="Shibata Y."/>
            <person name="Shimada H."/>
            <person name="Shimada K."/>
            <person name="Silva D."/>
            <person name="Sinclair B."/>
            <person name="Sperling S."/>
            <person name="Stupka E."/>
            <person name="Sugiura K."/>
            <person name="Sultana R."/>
            <person name="Takenaka Y."/>
            <person name="Taki K."/>
            <person name="Tammoja K."/>
            <person name="Tan S.L."/>
            <person name="Tang S."/>
            <person name="Taylor M.S."/>
            <person name="Tegner J."/>
            <person name="Teichmann S.A."/>
            <person name="Ueda H.R."/>
            <person name="van Nimwegen E."/>
            <person name="Verardo R."/>
            <person name="Wei C.L."/>
            <person name="Yagi K."/>
            <person name="Yamanishi H."/>
            <person name="Zabarovsky E."/>
            <person name="Zhu S."/>
            <person name="Zimmer A."/>
            <person name="Hide W."/>
            <person name="Bult C."/>
            <person name="Grimmond S.M."/>
            <person name="Teasdale R.D."/>
            <person name="Liu E.T."/>
            <person name="Brusic V."/>
            <person name="Quackenbush J."/>
            <person name="Wahlestedt C."/>
            <person name="Mattick J.S."/>
            <person name="Hume D.A."/>
            <person name="Kai C."/>
            <person name="Sasaki D."/>
            <person name="Tomaru Y."/>
            <person name="Fukuda S."/>
            <person name="Kanamori-Katayama M."/>
            <person name="Suzuki M."/>
            <person name="Aoki J."/>
            <person name="Arakawa T."/>
            <person name="Iida J."/>
            <person name="Imamura K."/>
            <person name="Itoh M."/>
            <person name="Kato T."/>
            <person name="Kawaji H."/>
            <person name="Kawagashira N."/>
            <person name="Kawashima T."/>
            <person name="Kojima M."/>
            <person name="Kondo S."/>
            <person name="Konno H."/>
            <person name="Nakano K."/>
            <person name="Ninomiya N."/>
            <person name="Nishio T."/>
            <person name="Okada M."/>
            <person name="Plessy C."/>
            <person name="Shibata K."/>
            <person name="Shiraki T."/>
            <person name="Suzuki S."/>
            <person name="Tagami M."/>
            <person name="Waki K."/>
            <person name="Watahiki A."/>
            <person name="Okamura-Oho Y."/>
            <person name="Suzuki H."/>
            <person name="Kawai J."/>
            <person name="Hayashizaki Y."/>
        </authorList>
    </citation>
    <scope>NUCLEOTIDE SEQUENCE [LARGE SCALE MRNA]</scope>
    <source>
        <strain>C57BL/6J</strain>
        <strain>NOD</strain>
        <tissue>Vagina</tissue>
    </source>
</reference>
<reference key="4">
    <citation type="journal article" date="2004" name="Genome Res.">
        <title>The status, quality, and expansion of the NIH full-length cDNA project: the Mammalian Gene Collection (MGC).</title>
        <authorList>
            <consortium name="The MGC Project Team"/>
        </authorList>
    </citation>
    <scope>NUCLEOTIDE SEQUENCE [LARGE SCALE MRNA]</scope>
    <source>
        <strain>FVB/N</strain>
        <tissue>Colon</tissue>
    </source>
</reference>
<keyword id="KW-0009">Actin-binding</keyword>
<keyword id="KW-0965">Cell junction</keyword>
<keyword id="KW-0963">Cytoplasm</keyword>
<keyword id="KW-0206">Cytoskeleton</keyword>
<keyword id="KW-0597">Phosphoprotein</keyword>
<keyword id="KW-1185">Reference proteome</keyword>
<keyword id="KW-0727">SH2 domain</keyword>
<keyword id="KW-0732">Signal</keyword>
<gene>
    <name type="primary">Tns4</name>
</gene>
<proteinExistence type="evidence at transcript level"/>
<sequence>MSSSLLAGGHMVSLTPCEESRMALHPTPSPGLPALCPYYTTESWGTQPLMAPTLRKGSSDRLQQAQQAEARAHCLLQGPGEQASGASQDLESCIDFSLEALNQMILEIDPTFQLLPSGTAGPQAESTNSIMSRNKKEEPEALDIKYIEVTSTRSRYLDGPQRCSSPCATPPFGSPRSGSLFLSRDIPRETRSSSNESLIFSGNQGRGPSPLTPSSLSNAIPCRESRTSGSPLATPPGWEKGLRAPQRGSRVSILSASPVSDVSYVFGSNQSLPHSSLSSYPSSSRSLGSPASSSSSLHSLDRGSQCGRPSDAQAPSNPILGMGQPQAVQSTPVAKEQASSCPASVTNSMADIPIVLINGSPEPQSPPAQRTPGHQDSVQSRVTSPSHLCQAIKSPSKTLPDVPLPASPDGPAKDMQPTMKFVMDTSKYWFKPSITREQAINLLRTEKPGAFVIRDSSSYRGSFGLALKVQETSASAPNRPGEDSSDLIRHFLIESSAKGVHLKGADEEPYFGSLSSFVCQHSIMALALPCKLTIPQKELGGAEPASDSPTHGQTSCLKISAGCHTLYLSSVSVETLSGALAVQKAISVTLERDVLPTPTVVHFKVTEQGITLTDVQRKVFFRRHYPLSALRFCGMDPEQRKWQKYCKPSRIFGFVAKSQTEPQENVCHLFAEYDAVQPASQVISLVTALLQDTERM</sequence>
<feature type="signal peptide" evidence="1">
    <location>
        <begin position="1"/>
        <end position="14"/>
    </location>
</feature>
<feature type="chain" id="PRO_0000248214" description="Tensin-4">
    <location>
        <begin position="15"/>
        <end position="696"/>
    </location>
</feature>
<feature type="domain" description="SH2" evidence="4">
    <location>
        <begin position="429"/>
        <end position="536"/>
    </location>
</feature>
<feature type="domain" description="PTB" evidence="3">
    <location>
        <begin position="563"/>
        <end position="690"/>
    </location>
</feature>
<feature type="region of interest" description="Disordered" evidence="5">
    <location>
        <begin position="157"/>
        <end position="246"/>
    </location>
</feature>
<feature type="region of interest" description="Disordered" evidence="5">
    <location>
        <begin position="271"/>
        <end position="344"/>
    </location>
</feature>
<feature type="region of interest" description="Disordered" evidence="5">
    <location>
        <begin position="356"/>
        <end position="416"/>
    </location>
</feature>
<feature type="compositionally biased region" description="Polar residues" evidence="5">
    <location>
        <begin position="192"/>
        <end position="203"/>
    </location>
</feature>
<feature type="compositionally biased region" description="Low complexity" evidence="5">
    <location>
        <begin position="271"/>
        <end position="304"/>
    </location>
</feature>
<feature type="compositionally biased region" description="Polar residues" evidence="5">
    <location>
        <begin position="326"/>
        <end position="344"/>
    </location>
</feature>
<feature type="compositionally biased region" description="Polar residues" evidence="5">
    <location>
        <begin position="372"/>
        <end position="397"/>
    </location>
</feature>
<feature type="modified residue" description="Phosphoserine" evidence="2">
    <location>
        <position position="230"/>
    </location>
</feature>
<feature type="sequence conflict" description="In Ref. 3; BAC29598." evidence="6" ref="3">
    <original>S</original>
    <variation>I</variation>
    <location>
        <position position="268"/>
    </location>
</feature>
<feature type="sequence conflict" description="In Ref. 3; BAE41928." evidence="6" ref="3">
    <original>H</original>
    <variation>D</variation>
    <location>
        <position position="490"/>
    </location>
</feature>
<feature type="sequence conflict" description="In Ref. 3; BAE41928." evidence="6" ref="3">
    <original>E</original>
    <variation>K</variation>
    <location>
        <position position="507"/>
    </location>
</feature>
<feature type="sequence conflict" description="In Ref. 4; AAH55820." evidence="6" ref="4">
    <original>T</original>
    <variation>I</variation>
    <location>
        <position position="589"/>
    </location>
</feature>
<accession>Q8BZ33</accession>
<accession>A2A552</accession>
<accession>Q3TCM8</accession>
<accession>Q7TNR5</accession>
<name>TENS4_MOUSE</name>
<organism>
    <name type="scientific">Mus musculus</name>
    <name type="common">Mouse</name>
    <dbReference type="NCBI Taxonomy" id="10090"/>
    <lineage>
        <taxon>Eukaryota</taxon>
        <taxon>Metazoa</taxon>
        <taxon>Chordata</taxon>
        <taxon>Craniata</taxon>
        <taxon>Vertebrata</taxon>
        <taxon>Euteleostomi</taxon>
        <taxon>Mammalia</taxon>
        <taxon>Eutheria</taxon>
        <taxon>Euarchontoglires</taxon>
        <taxon>Glires</taxon>
        <taxon>Rodentia</taxon>
        <taxon>Myomorpha</taxon>
        <taxon>Muroidea</taxon>
        <taxon>Muridae</taxon>
        <taxon>Murinae</taxon>
        <taxon>Mus</taxon>
        <taxon>Mus</taxon>
    </lineage>
</organism>
<evidence type="ECO:0000250" key="1"/>
<evidence type="ECO:0000250" key="2">
    <source>
        <dbReference type="UniProtKB" id="Q8IZW8"/>
    </source>
</evidence>
<evidence type="ECO:0000255" key="3"/>
<evidence type="ECO:0000255" key="4">
    <source>
        <dbReference type="PROSITE-ProRule" id="PRU00191"/>
    </source>
</evidence>
<evidence type="ECO:0000256" key="5">
    <source>
        <dbReference type="SAM" id="MobiDB-lite"/>
    </source>
</evidence>
<evidence type="ECO:0000305" key="6"/>
<dbReference type="EMBL" id="AL591366">
    <property type="status" value="NOT_ANNOTATED_CDS"/>
    <property type="molecule type" value="Genomic_DNA"/>
</dbReference>
<dbReference type="EMBL" id="CH466556">
    <property type="protein sequence ID" value="EDL16179.1"/>
    <property type="molecule type" value="Genomic_DNA"/>
</dbReference>
<dbReference type="EMBL" id="AK036834">
    <property type="protein sequence ID" value="BAC29598.1"/>
    <property type="molecule type" value="mRNA"/>
</dbReference>
<dbReference type="EMBL" id="AK170638">
    <property type="protein sequence ID" value="BAE41928.1"/>
    <property type="molecule type" value="mRNA"/>
</dbReference>
<dbReference type="EMBL" id="BC055820">
    <property type="protein sequence ID" value="AAH55820.1"/>
    <property type="molecule type" value="mRNA"/>
</dbReference>
<dbReference type="CCDS" id="CCDS25372.1"/>
<dbReference type="RefSeq" id="NP_766152.2">
    <property type="nucleotide sequence ID" value="NM_172564.3"/>
</dbReference>
<dbReference type="SMR" id="Q8BZ33"/>
<dbReference type="FunCoup" id="Q8BZ33">
    <property type="interactions" value="46"/>
</dbReference>
<dbReference type="STRING" id="10090.ENSMUSP00000017751"/>
<dbReference type="GlyGen" id="Q8BZ33">
    <property type="glycosylation" value="4 sites"/>
</dbReference>
<dbReference type="iPTMnet" id="Q8BZ33"/>
<dbReference type="PhosphoSitePlus" id="Q8BZ33"/>
<dbReference type="PaxDb" id="10090-ENSMUSP00000017751"/>
<dbReference type="PeptideAtlas" id="Q8BZ33"/>
<dbReference type="ProteomicsDB" id="263277"/>
<dbReference type="Antibodypedia" id="16494">
    <property type="antibodies" value="221 antibodies from 27 providers"/>
</dbReference>
<dbReference type="DNASU" id="217169"/>
<dbReference type="Ensembl" id="ENSMUST00000017751.3">
    <property type="protein sequence ID" value="ENSMUSP00000017751.3"/>
    <property type="gene ID" value="ENSMUSG00000017607.10"/>
</dbReference>
<dbReference type="GeneID" id="217169"/>
<dbReference type="KEGG" id="mmu:217169"/>
<dbReference type="UCSC" id="uc007lig.2">
    <property type="organism name" value="mouse"/>
</dbReference>
<dbReference type="AGR" id="MGI:2144377"/>
<dbReference type="CTD" id="84951"/>
<dbReference type="MGI" id="MGI:2144377">
    <property type="gene designation" value="Tns4"/>
</dbReference>
<dbReference type="VEuPathDB" id="HostDB:ENSMUSG00000017607"/>
<dbReference type="eggNOG" id="KOG1930">
    <property type="taxonomic scope" value="Eukaryota"/>
</dbReference>
<dbReference type="GeneTree" id="ENSGT00940000160142"/>
<dbReference type="HOGENOM" id="CLU_398985_0_0_1"/>
<dbReference type="InParanoid" id="Q8BZ33"/>
<dbReference type="OMA" id="SQPSMKF"/>
<dbReference type="OrthoDB" id="6273691at2759"/>
<dbReference type="PhylomeDB" id="Q8BZ33"/>
<dbReference type="TreeFam" id="TF315996"/>
<dbReference type="Reactome" id="R-MMU-8875513">
    <property type="pathway name" value="MET interacts with TNS proteins"/>
</dbReference>
<dbReference type="BioGRID-ORCS" id="217169">
    <property type="hits" value="2 hits in 78 CRISPR screens"/>
</dbReference>
<dbReference type="ChiTaRS" id="Tns4">
    <property type="organism name" value="mouse"/>
</dbReference>
<dbReference type="PRO" id="PR:Q8BZ33"/>
<dbReference type="Proteomes" id="UP000000589">
    <property type="component" value="Chromosome 11"/>
</dbReference>
<dbReference type="RNAct" id="Q8BZ33">
    <property type="molecule type" value="protein"/>
</dbReference>
<dbReference type="Bgee" id="ENSMUSG00000017607">
    <property type="expression patterns" value="Expressed in left colon and 60 other cell types or tissues"/>
</dbReference>
<dbReference type="GO" id="GO:0005856">
    <property type="term" value="C:cytoskeleton"/>
    <property type="evidence" value="ECO:0007669"/>
    <property type="project" value="UniProtKB-SubCell"/>
</dbReference>
<dbReference type="GO" id="GO:0005829">
    <property type="term" value="C:cytosol"/>
    <property type="evidence" value="ECO:0007669"/>
    <property type="project" value="Ensembl"/>
</dbReference>
<dbReference type="GO" id="GO:0005925">
    <property type="term" value="C:focal adhesion"/>
    <property type="evidence" value="ECO:0007669"/>
    <property type="project" value="UniProtKB-SubCell"/>
</dbReference>
<dbReference type="GO" id="GO:0003779">
    <property type="term" value="F:actin binding"/>
    <property type="evidence" value="ECO:0007669"/>
    <property type="project" value="UniProtKB-KW"/>
</dbReference>
<dbReference type="GO" id="GO:0008104">
    <property type="term" value="P:protein localization"/>
    <property type="evidence" value="ECO:0007669"/>
    <property type="project" value="Ensembl"/>
</dbReference>
<dbReference type="CDD" id="cd01213">
    <property type="entry name" value="PTB_tensin"/>
    <property type="match status" value="1"/>
</dbReference>
<dbReference type="FunFam" id="2.30.29.30:FF:000039">
    <property type="entry name" value="Tensin 1"/>
    <property type="match status" value="1"/>
</dbReference>
<dbReference type="Gene3D" id="2.30.29.30">
    <property type="entry name" value="Pleckstrin-homology domain (PH domain)/Phosphotyrosine-binding domain (PTB)"/>
    <property type="match status" value="1"/>
</dbReference>
<dbReference type="Gene3D" id="3.30.505.10">
    <property type="entry name" value="SH2 domain"/>
    <property type="match status" value="1"/>
</dbReference>
<dbReference type="InterPro" id="IPR011993">
    <property type="entry name" value="PH-like_dom_sf"/>
</dbReference>
<dbReference type="InterPro" id="IPR013625">
    <property type="entry name" value="PTB"/>
</dbReference>
<dbReference type="InterPro" id="IPR006020">
    <property type="entry name" value="PTB/PI_dom"/>
</dbReference>
<dbReference type="InterPro" id="IPR000980">
    <property type="entry name" value="SH2"/>
</dbReference>
<dbReference type="InterPro" id="IPR036860">
    <property type="entry name" value="SH2_dom_sf"/>
</dbReference>
<dbReference type="InterPro" id="IPR033929">
    <property type="entry name" value="Tensin_PTB"/>
</dbReference>
<dbReference type="InterPro" id="IPR051484">
    <property type="entry name" value="Tensin_PTEN_phosphatase"/>
</dbReference>
<dbReference type="PANTHER" id="PTHR45734">
    <property type="entry name" value="TENSIN"/>
    <property type="match status" value="1"/>
</dbReference>
<dbReference type="PANTHER" id="PTHR45734:SF6">
    <property type="entry name" value="TENSIN-4"/>
    <property type="match status" value="1"/>
</dbReference>
<dbReference type="Pfam" id="PF08416">
    <property type="entry name" value="PTB"/>
    <property type="match status" value="1"/>
</dbReference>
<dbReference type="Pfam" id="PF00017">
    <property type="entry name" value="SH2"/>
    <property type="match status" value="1"/>
</dbReference>
<dbReference type="SMART" id="SM00462">
    <property type="entry name" value="PTB"/>
    <property type="match status" value="1"/>
</dbReference>
<dbReference type="SMART" id="SM00252">
    <property type="entry name" value="SH2"/>
    <property type="match status" value="1"/>
</dbReference>
<dbReference type="SUPFAM" id="SSF50729">
    <property type="entry name" value="PH domain-like"/>
    <property type="match status" value="1"/>
</dbReference>
<dbReference type="SUPFAM" id="SSF55550">
    <property type="entry name" value="SH2 domain"/>
    <property type="match status" value="1"/>
</dbReference>
<dbReference type="PROSITE" id="PS50001">
    <property type="entry name" value="SH2"/>
    <property type="match status" value="1"/>
</dbReference>
<protein>
    <recommendedName>
        <fullName>Tensin-4</fullName>
    </recommendedName>
</protein>